<organism>
    <name type="scientific">Pectobacterium carotovorum subsp. carotovorum (strain PC1)</name>
    <dbReference type="NCBI Taxonomy" id="561230"/>
    <lineage>
        <taxon>Bacteria</taxon>
        <taxon>Pseudomonadati</taxon>
        <taxon>Pseudomonadota</taxon>
        <taxon>Gammaproteobacteria</taxon>
        <taxon>Enterobacterales</taxon>
        <taxon>Pectobacteriaceae</taxon>
        <taxon>Pectobacterium</taxon>
    </lineage>
</organism>
<name>Y2779_PECCP</name>
<keyword id="KW-0997">Cell inner membrane</keyword>
<keyword id="KW-1003">Cell membrane</keyword>
<keyword id="KW-0472">Membrane</keyword>
<keyword id="KW-0812">Transmembrane</keyword>
<keyword id="KW-1133">Transmembrane helix</keyword>
<proteinExistence type="inferred from homology"/>
<protein>
    <recommendedName>
        <fullName evidence="1">UPF0208 membrane protein PC1_2779</fullName>
    </recommendedName>
</protein>
<gene>
    <name type="ordered locus">PC1_2779</name>
</gene>
<evidence type="ECO:0000255" key="1">
    <source>
        <dbReference type="HAMAP-Rule" id="MF_01101"/>
    </source>
</evidence>
<feature type="chain" id="PRO_1000213547" description="UPF0208 membrane protein PC1_2779">
    <location>
        <begin position="1"/>
        <end position="151"/>
    </location>
</feature>
<feature type="transmembrane region" description="Helical" evidence="1">
    <location>
        <begin position="46"/>
        <end position="66"/>
    </location>
</feature>
<feature type="transmembrane region" description="Helical" evidence="1">
    <location>
        <begin position="69"/>
        <end position="89"/>
    </location>
</feature>
<sequence length="151" mass="17043">MATKPDSRISWLQLLQRGQHYMKTWPAEKQLAPVFPENRVARATRFGIRIMPPLAVFTLTWQIALGGQLGPAIATALFACSLPLQGLWWLGRRSVTPLPPTLAQWFHEIRHKLLESGQALAPLEEAPTYQSLADVLKRAFSQLDKTFLDDL</sequence>
<comment type="subcellular location">
    <subcellularLocation>
        <location evidence="1">Cell inner membrane</location>
        <topology evidence="1">Multi-pass membrane protein</topology>
    </subcellularLocation>
</comment>
<comment type="similarity">
    <text evidence="1">Belongs to the UPF0208 family.</text>
</comment>
<accession>C6DA53</accession>
<reference key="1">
    <citation type="submission" date="2009-07" db="EMBL/GenBank/DDBJ databases">
        <title>Complete sequence of Pectobacterium carotovorum subsp. carotovorum PC1.</title>
        <authorList>
            <consortium name="US DOE Joint Genome Institute"/>
            <person name="Lucas S."/>
            <person name="Copeland A."/>
            <person name="Lapidus A."/>
            <person name="Glavina del Rio T."/>
            <person name="Tice H."/>
            <person name="Bruce D."/>
            <person name="Goodwin L."/>
            <person name="Pitluck S."/>
            <person name="Munk A.C."/>
            <person name="Brettin T."/>
            <person name="Detter J.C."/>
            <person name="Han C."/>
            <person name="Tapia R."/>
            <person name="Larimer F."/>
            <person name="Land M."/>
            <person name="Hauser L."/>
            <person name="Kyrpides N."/>
            <person name="Mikhailova N."/>
            <person name="Balakrishnan V."/>
            <person name="Glasner J."/>
            <person name="Perna N.T."/>
        </authorList>
    </citation>
    <scope>NUCLEOTIDE SEQUENCE [LARGE SCALE GENOMIC DNA]</scope>
    <source>
        <strain>PC1</strain>
    </source>
</reference>
<dbReference type="EMBL" id="CP001657">
    <property type="protein sequence ID" value="ACT13809.1"/>
    <property type="molecule type" value="Genomic_DNA"/>
</dbReference>
<dbReference type="STRING" id="561230.PC1_2779"/>
<dbReference type="KEGG" id="pct:PC1_2779"/>
<dbReference type="eggNOG" id="COG3092">
    <property type="taxonomic scope" value="Bacteria"/>
</dbReference>
<dbReference type="HOGENOM" id="CLU_128746_0_0_6"/>
<dbReference type="OrthoDB" id="7066670at2"/>
<dbReference type="Proteomes" id="UP000002736">
    <property type="component" value="Chromosome"/>
</dbReference>
<dbReference type="GO" id="GO:0005886">
    <property type="term" value="C:plasma membrane"/>
    <property type="evidence" value="ECO:0007669"/>
    <property type="project" value="UniProtKB-SubCell"/>
</dbReference>
<dbReference type="HAMAP" id="MF_01101">
    <property type="entry name" value="UPF0208"/>
    <property type="match status" value="1"/>
</dbReference>
<dbReference type="InterPro" id="IPR007334">
    <property type="entry name" value="UPF0208"/>
</dbReference>
<dbReference type="NCBIfam" id="NF002493">
    <property type="entry name" value="PRK01816.1"/>
    <property type="match status" value="1"/>
</dbReference>
<dbReference type="Pfam" id="PF04217">
    <property type="entry name" value="DUF412"/>
    <property type="match status" value="1"/>
</dbReference>